<gene>
    <name evidence="1" type="primary">rlmN</name>
    <name type="ordered locus">Smlt2055</name>
</gene>
<keyword id="KW-0004">4Fe-4S</keyword>
<keyword id="KW-0963">Cytoplasm</keyword>
<keyword id="KW-1015">Disulfide bond</keyword>
<keyword id="KW-0408">Iron</keyword>
<keyword id="KW-0411">Iron-sulfur</keyword>
<keyword id="KW-0479">Metal-binding</keyword>
<keyword id="KW-0489">Methyltransferase</keyword>
<keyword id="KW-1185">Reference proteome</keyword>
<keyword id="KW-0698">rRNA processing</keyword>
<keyword id="KW-0949">S-adenosyl-L-methionine</keyword>
<keyword id="KW-0808">Transferase</keyword>
<keyword id="KW-0819">tRNA processing</keyword>
<proteinExistence type="inferred from homology"/>
<name>RLMN_STRMK</name>
<comment type="function">
    <text evidence="1">Specifically methylates position 2 of adenine 2503 in 23S rRNA and position 2 of adenine 37 in tRNAs. m2A2503 modification seems to play a crucial role in the proofreading step occurring at the peptidyl transferase center and thus would serve to optimize ribosomal fidelity.</text>
</comment>
<comment type="catalytic activity">
    <reaction evidence="1">
        <text>adenosine(2503) in 23S rRNA + 2 reduced [2Fe-2S]-[ferredoxin] + 2 S-adenosyl-L-methionine = 2-methyladenosine(2503) in 23S rRNA + 5'-deoxyadenosine + L-methionine + 2 oxidized [2Fe-2S]-[ferredoxin] + S-adenosyl-L-homocysteine</text>
        <dbReference type="Rhea" id="RHEA:42916"/>
        <dbReference type="Rhea" id="RHEA-COMP:10000"/>
        <dbReference type="Rhea" id="RHEA-COMP:10001"/>
        <dbReference type="Rhea" id="RHEA-COMP:10152"/>
        <dbReference type="Rhea" id="RHEA-COMP:10282"/>
        <dbReference type="ChEBI" id="CHEBI:17319"/>
        <dbReference type="ChEBI" id="CHEBI:33737"/>
        <dbReference type="ChEBI" id="CHEBI:33738"/>
        <dbReference type="ChEBI" id="CHEBI:57844"/>
        <dbReference type="ChEBI" id="CHEBI:57856"/>
        <dbReference type="ChEBI" id="CHEBI:59789"/>
        <dbReference type="ChEBI" id="CHEBI:74411"/>
        <dbReference type="ChEBI" id="CHEBI:74497"/>
        <dbReference type="EC" id="2.1.1.192"/>
    </reaction>
</comment>
<comment type="catalytic activity">
    <reaction evidence="1">
        <text>adenosine(37) in tRNA + 2 reduced [2Fe-2S]-[ferredoxin] + 2 S-adenosyl-L-methionine = 2-methyladenosine(37) in tRNA + 5'-deoxyadenosine + L-methionine + 2 oxidized [2Fe-2S]-[ferredoxin] + S-adenosyl-L-homocysteine</text>
        <dbReference type="Rhea" id="RHEA:43332"/>
        <dbReference type="Rhea" id="RHEA-COMP:10000"/>
        <dbReference type="Rhea" id="RHEA-COMP:10001"/>
        <dbReference type="Rhea" id="RHEA-COMP:10162"/>
        <dbReference type="Rhea" id="RHEA-COMP:10485"/>
        <dbReference type="ChEBI" id="CHEBI:17319"/>
        <dbReference type="ChEBI" id="CHEBI:33737"/>
        <dbReference type="ChEBI" id="CHEBI:33738"/>
        <dbReference type="ChEBI" id="CHEBI:57844"/>
        <dbReference type="ChEBI" id="CHEBI:57856"/>
        <dbReference type="ChEBI" id="CHEBI:59789"/>
        <dbReference type="ChEBI" id="CHEBI:74411"/>
        <dbReference type="ChEBI" id="CHEBI:74497"/>
        <dbReference type="EC" id="2.1.1.192"/>
    </reaction>
</comment>
<comment type="cofactor">
    <cofactor evidence="1">
        <name>[4Fe-4S] cluster</name>
        <dbReference type="ChEBI" id="CHEBI:49883"/>
    </cofactor>
    <text evidence="1">Binds 1 [4Fe-4S] cluster. The cluster is coordinated with 3 cysteines and an exchangeable S-adenosyl-L-methionine.</text>
</comment>
<comment type="subcellular location">
    <subcellularLocation>
        <location evidence="1">Cytoplasm</location>
    </subcellularLocation>
</comment>
<comment type="miscellaneous">
    <text evidence="1">Reaction proceeds by a ping-pong mechanism involving intermediate methylation of a conserved cysteine residue.</text>
</comment>
<comment type="similarity">
    <text evidence="1">Belongs to the radical SAM superfamily. RlmN family.</text>
</comment>
<protein>
    <recommendedName>
        <fullName evidence="1">Dual-specificity RNA methyltransferase RlmN</fullName>
        <ecNumber evidence="1">2.1.1.192</ecNumber>
    </recommendedName>
    <alternativeName>
        <fullName evidence="1">23S rRNA (adenine(2503)-C(2))-methyltransferase</fullName>
    </alternativeName>
    <alternativeName>
        <fullName evidence="1">23S rRNA m2A2503 methyltransferase</fullName>
    </alternativeName>
    <alternativeName>
        <fullName evidence="1">Ribosomal RNA large subunit methyltransferase N</fullName>
    </alternativeName>
    <alternativeName>
        <fullName evidence="1">tRNA (adenine(37)-C(2))-methyltransferase</fullName>
    </alternativeName>
    <alternativeName>
        <fullName evidence="1">tRNA m2A37 methyltransferase</fullName>
    </alternativeName>
</protein>
<organism>
    <name type="scientific">Stenotrophomonas maltophilia (strain K279a)</name>
    <dbReference type="NCBI Taxonomy" id="522373"/>
    <lineage>
        <taxon>Bacteria</taxon>
        <taxon>Pseudomonadati</taxon>
        <taxon>Pseudomonadota</taxon>
        <taxon>Gammaproteobacteria</taxon>
        <taxon>Lysobacterales</taxon>
        <taxon>Lysobacteraceae</taxon>
        <taxon>Stenotrophomonas</taxon>
        <taxon>Stenotrophomonas maltophilia group</taxon>
    </lineage>
</organism>
<dbReference type="EC" id="2.1.1.192" evidence="1"/>
<dbReference type="EMBL" id="AM743169">
    <property type="protein sequence ID" value="CAQ45562.1"/>
    <property type="molecule type" value="Genomic_DNA"/>
</dbReference>
<dbReference type="RefSeq" id="WP_005409296.1">
    <property type="nucleotide sequence ID" value="NC_010943.1"/>
</dbReference>
<dbReference type="SMR" id="B2FNQ6"/>
<dbReference type="EnsemblBacteria" id="CAQ45562">
    <property type="protein sequence ID" value="CAQ45562"/>
    <property type="gene ID" value="Smlt2055"/>
</dbReference>
<dbReference type="GeneID" id="97260819"/>
<dbReference type="KEGG" id="sml:Smlt2055"/>
<dbReference type="eggNOG" id="COG0820">
    <property type="taxonomic scope" value="Bacteria"/>
</dbReference>
<dbReference type="HOGENOM" id="CLU_029101_0_0_6"/>
<dbReference type="Proteomes" id="UP000008840">
    <property type="component" value="Chromosome"/>
</dbReference>
<dbReference type="GO" id="GO:0005737">
    <property type="term" value="C:cytoplasm"/>
    <property type="evidence" value="ECO:0007669"/>
    <property type="project" value="UniProtKB-SubCell"/>
</dbReference>
<dbReference type="GO" id="GO:0051539">
    <property type="term" value="F:4 iron, 4 sulfur cluster binding"/>
    <property type="evidence" value="ECO:0007669"/>
    <property type="project" value="UniProtKB-UniRule"/>
</dbReference>
<dbReference type="GO" id="GO:0046872">
    <property type="term" value="F:metal ion binding"/>
    <property type="evidence" value="ECO:0007669"/>
    <property type="project" value="UniProtKB-KW"/>
</dbReference>
<dbReference type="GO" id="GO:0070040">
    <property type="term" value="F:rRNA (adenine(2503)-C2-)-methyltransferase activity"/>
    <property type="evidence" value="ECO:0007669"/>
    <property type="project" value="UniProtKB-UniRule"/>
</dbReference>
<dbReference type="GO" id="GO:0019843">
    <property type="term" value="F:rRNA binding"/>
    <property type="evidence" value="ECO:0007669"/>
    <property type="project" value="UniProtKB-UniRule"/>
</dbReference>
<dbReference type="GO" id="GO:0002935">
    <property type="term" value="F:tRNA (adenine(37)-C2)-methyltransferase activity"/>
    <property type="evidence" value="ECO:0007669"/>
    <property type="project" value="UniProtKB-UniRule"/>
</dbReference>
<dbReference type="GO" id="GO:0000049">
    <property type="term" value="F:tRNA binding"/>
    <property type="evidence" value="ECO:0007669"/>
    <property type="project" value="UniProtKB-UniRule"/>
</dbReference>
<dbReference type="GO" id="GO:0070475">
    <property type="term" value="P:rRNA base methylation"/>
    <property type="evidence" value="ECO:0007669"/>
    <property type="project" value="UniProtKB-UniRule"/>
</dbReference>
<dbReference type="GO" id="GO:0030488">
    <property type="term" value="P:tRNA methylation"/>
    <property type="evidence" value="ECO:0007669"/>
    <property type="project" value="UniProtKB-UniRule"/>
</dbReference>
<dbReference type="CDD" id="cd01335">
    <property type="entry name" value="Radical_SAM"/>
    <property type="match status" value="1"/>
</dbReference>
<dbReference type="FunFam" id="1.10.150.530:FF:000003">
    <property type="entry name" value="Dual-specificity RNA methyltransferase RlmN"/>
    <property type="match status" value="1"/>
</dbReference>
<dbReference type="FunFam" id="3.20.20.70:FF:000008">
    <property type="entry name" value="Dual-specificity RNA methyltransferase RlmN"/>
    <property type="match status" value="1"/>
</dbReference>
<dbReference type="Gene3D" id="1.10.150.530">
    <property type="match status" value="1"/>
</dbReference>
<dbReference type="Gene3D" id="3.20.20.70">
    <property type="entry name" value="Aldolase class I"/>
    <property type="match status" value="1"/>
</dbReference>
<dbReference type="HAMAP" id="MF_01849">
    <property type="entry name" value="RNA_methyltr_RlmN"/>
    <property type="match status" value="1"/>
</dbReference>
<dbReference type="InterPro" id="IPR013785">
    <property type="entry name" value="Aldolase_TIM"/>
</dbReference>
<dbReference type="InterPro" id="IPR040072">
    <property type="entry name" value="Methyltransferase_A"/>
</dbReference>
<dbReference type="InterPro" id="IPR048641">
    <property type="entry name" value="RlmN_N"/>
</dbReference>
<dbReference type="InterPro" id="IPR027492">
    <property type="entry name" value="RNA_MTrfase_RlmN"/>
</dbReference>
<dbReference type="InterPro" id="IPR004383">
    <property type="entry name" value="rRNA_lsu_MTrfase_RlmN/Cfr"/>
</dbReference>
<dbReference type="InterPro" id="IPR007197">
    <property type="entry name" value="rSAM"/>
</dbReference>
<dbReference type="NCBIfam" id="TIGR00048">
    <property type="entry name" value="rRNA_mod_RlmN"/>
    <property type="match status" value="1"/>
</dbReference>
<dbReference type="PANTHER" id="PTHR30544">
    <property type="entry name" value="23S RRNA METHYLTRANSFERASE"/>
    <property type="match status" value="1"/>
</dbReference>
<dbReference type="PANTHER" id="PTHR30544:SF5">
    <property type="entry name" value="RADICAL SAM CORE DOMAIN-CONTAINING PROTEIN"/>
    <property type="match status" value="1"/>
</dbReference>
<dbReference type="Pfam" id="PF04055">
    <property type="entry name" value="Radical_SAM"/>
    <property type="match status" value="1"/>
</dbReference>
<dbReference type="Pfam" id="PF21016">
    <property type="entry name" value="RlmN_N"/>
    <property type="match status" value="1"/>
</dbReference>
<dbReference type="PIRSF" id="PIRSF006004">
    <property type="entry name" value="CHP00048"/>
    <property type="match status" value="1"/>
</dbReference>
<dbReference type="SFLD" id="SFLDF00275">
    <property type="entry name" value="adenosine_C2_methyltransferase"/>
    <property type="match status" value="1"/>
</dbReference>
<dbReference type="SFLD" id="SFLDG01062">
    <property type="entry name" value="methyltransferase_(Class_A)"/>
    <property type="match status" value="1"/>
</dbReference>
<dbReference type="SUPFAM" id="SSF102114">
    <property type="entry name" value="Radical SAM enzymes"/>
    <property type="match status" value="1"/>
</dbReference>
<dbReference type="PROSITE" id="PS51918">
    <property type="entry name" value="RADICAL_SAM"/>
    <property type="match status" value="1"/>
</dbReference>
<feature type="chain" id="PRO_0000350447" description="Dual-specificity RNA methyltransferase RlmN">
    <location>
        <begin position="1"/>
        <end position="401"/>
    </location>
</feature>
<feature type="domain" description="Radical SAM core" evidence="2">
    <location>
        <begin position="120"/>
        <end position="365"/>
    </location>
</feature>
<feature type="active site" description="Proton acceptor" evidence="1">
    <location>
        <position position="114"/>
    </location>
</feature>
<feature type="active site" description="S-methylcysteine intermediate" evidence="1">
    <location>
        <position position="370"/>
    </location>
</feature>
<feature type="binding site" evidence="1">
    <location>
        <position position="134"/>
    </location>
    <ligand>
        <name>[4Fe-4S] cluster</name>
        <dbReference type="ChEBI" id="CHEBI:49883"/>
        <note>4Fe-4S-S-AdoMet</note>
    </ligand>
</feature>
<feature type="binding site" evidence="1">
    <location>
        <position position="138"/>
    </location>
    <ligand>
        <name>[4Fe-4S] cluster</name>
        <dbReference type="ChEBI" id="CHEBI:49883"/>
        <note>4Fe-4S-S-AdoMet</note>
    </ligand>
</feature>
<feature type="binding site" evidence="1">
    <location>
        <position position="141"/>
    </location>
    <ligand>
        <name>[4Fe-4S] cluster</name>
        <dbReference type="ChEBI" id="CHEBI:49883"/>
        <note>4Fe-4S-S-AdoMet</note>
    </ligand>
</feature>
<feature type="binding site" evidence="1">
    <location>
        <begin position="187"/>
        <end position="188"/>
    </location>
    <ligand>
        <name>S-adenosyl-L-methionine</name>
        <dbReference type="ChEBI" id="CHEBI:59789"/>
    </ligand>
</feature>
<feature type="binding site" evidence="1">
    <location>
        <position position="219"/>
    </location>
    <ligand>
        <name>S-adenosyl-L-methionine</name>
        <dbReference type="ChEBI" id="CHEBI:59789"/>
    </ligand>
</feature>
<feature type="binding site" evidence="1">
    <location>
        <begin position="241"/>
        <end position="243"/>
    </location>
    <ligand>
        <name>S-adenosyl-L-methionine</name>
        <dbReference type="ChEBI" id="CHEBI:59789"/>
    </ligand>
</feature>
<feature type="binding site" evidence="1">
    <location>
        <position position="327"/>
    </location>
    <ligand>
        <name>S-adenosyl-L-methionine</name>
        <dbReference type="ChEBI" id="CHEBI:59789"/>
    </ligand>
</feature>
<feature type="disulfide bond" description="(transient)" evidence="1">
    <location>
        <begin position="127"/>
        <end position="370"/>
    </location>
</feature>
<accession>B2FNQ6</accession>
<sequence>MNEVVQSPAIQPLPKSAPTAGKQNLLDLDRAGLEKFFVEVLGEKKFRAHQVMKWIHHRYVTDFDEMTDLGKVLRAKLQAHAEVLVPNIVFDKPSADGTHKWLLAMGVDGKNAIETVYIPDKTRGTLCVSSQVGCGLNCTFCSTATQGFNRNLTTAEIIGQVWVAARHLGNVPHQMRRLTNVVMMGMGEPLMNFDNVVRAMSVMRDDLGYGLANKRVTLSTSGLVPQIDRLSAESDVSLAVSLHAPNDALRETLVPLNKKYPIAELMASCARYLRANKRRESVTFEYTLMKGINDKPEHARELARLMRQFDNAVQAKDSGKVNLIPFNPFPGTRYERSEEAHIRAFQKILLDSNVLTMVRRTRGDDIDAACGQLKGQVMDRTRRQAEFNKTLQAGKGSDAAA</sequence>
<evidence type="ECO:0000255" key="1">
    <source>
        <dbReference type="HAMAP-Rule" id="MF_01849"/>
    </source>
</evidence>
<evidence type="ECO:0000255" key="2">
    <source>
        <dbReference type="PROSITE-ProRule" id="PRU01266"/>
    </source>
</evidence>
<reference key="1">
    <citation type="journal article" date="2008" name="Genome Biol.">
        <title>The complete genome, comparative and functional analysis of Stenotrophomonas maltophilia reveals an organism heavily shielded by drug resistance determinants.</title>
        <authorList>
            <person name="Crossman L.C."/>
            <person name="Gould V.C."/>
            <person name="Dow J.M."/>
            <person name="Vernikos G.S."/>
            <person name="Okazaki A."/>
            <person name="Sebaihia M."/>
            <person name="Saunders D."/>
            <person name="Arrowsmith C."/>
            <person name="Carver T."/>
            <person name="Peters N."/>
            <person name="Adlem E."/>
            <person name="Kerhornou A."/>
            <person name="Lord A."/>
            <person name="Murphy L."/>
            <person name="Seeger K."/>
            <person name="Squares R."/>
            <person name="Rutter S."/>
            <person name="Quail M.A."/>
            <person name="Rajandream M.A."/>
            <person name="Harris D."/>
            <person name="Churcher C."/>
            <person name="Bentley S.D."/>
            <person name="Parkhill J."/>
            <person name="Thomson N.R."/>
            <person name="Avison M.B."/>
        </authorList>
    </citation>
    <scope>NUCLEOTIDE SEQUENCE [LARGE SCALE GENOMIC DNA]</scope>
    <source>
        <strain>K279a</strain>
    </source>
</reference>